<name>T200B_HUMAN</name>
<gene>
    <name type="primary">TMEM200B</name>
    <name type="synonym">TTMB</name>
</gene>
<dbReference type="EMBL" id="AL110282">
    <property type="protein sequence ID" value="CAH10727.1"/>
    <property type="molecule type" value="mRNA"/>
</dbReference>
<dbReference type="EMBL" id="BC064375">
    <property type="protein sequence ID" value="AAH64375.2"/>
    <property type="molecule type" value="mRNA"/>
</dbReference>
<dbReference type="EMBL" id="BC064538">
    <property type="protein sequence ID" value="AAH64538.1"/>
    <property type="molecule type" value="mRNA"/>
</dbReference>
<dbReference type="EMBL" id="BC082989">
    <property type="protein sequence ID" value="AAH82989.1"/>
    <property type="molecule type" value="mRNA"/>
</dbReference>
<dbReference type="EMBL" id="BC110336">
    <property type="protein sequence ID" value="AAI10337.1"/>
    <property type="molecule type" value="mRNA"/>
</dbReference>
<dbReference type="CCDS" id="CCDS30658.1"/>
<dbReference type="RefSeq" id="NP_001003682.1">
    <property type="nucleotide sequence ID" value="NM_001003682.4"/>
</dbReference>
<dbReference type="RefSeq" id="NP_001165339.1">
    <property type="nucleotide sequence ID" value="NM_001171868.2"/>
</dbReference>
<dbReference type="BioGRID" id="134353">
    <property type="interactions" value="1"/>
</dbReference>
<dbReference type="FunCoup" id="Q69YZ2">
    <property type="interactions" value="18"/>
</dbReference>
<dbReference type="IntAct" id="Q69YZ2">
    <property type="interactions" value="2"/>
</dbReference>
<dbReference type="MINT" id="Q69YZ2"/>
<dbReference type="STRING" id="9606.ENSP00000428544"/>
<dbReference type="GlyCosmos" id="Q69YZ2">
    <property type="glycosylation" value="1 site, No reported glycans"/>
</dbReference>
<dbReference type="GlyGen" id="Q69YZ2">
    <property type="glycosylation" value="1 site"/>
</dbReference>
<dbReference type="iPTMnet" id="Q69YZ2"/>
<dbReference type="PhosphoSitePlus" id="Q69YZ2"/>
<dbReference type="BioMuta" id="TMEM200B"/>
<dbReference type="DMDM" id="74736342"/>
<dbReference type="MassIVE" id="Q69YZ2"/>
<dbReference type="PaxDb" id="9606-ENSP00000428544"/>
<dbReference type="PeptideAtlas" id="Q69YZ2"/>
<dbReference type="ProteomicsDB" id="66175"/>
<dbReference type="Antibodypedia" id="55485">
    <property type="antibodies" value="28 antibodies from 14 providers"/>
</dbReference>
<dbReference type="DNASU" id="399474"/>
<dbReference type="Ensembl" id="ENST00000420504.2">
    <property type="protein sequence ID" value="ENSP00000428544.1"/>
    <property type="gene ID" value="ENSG00000253304.2"/>
</dbReference>
<dbReference type="Ensembl" id="ENST00000521452.2">
    <property type="protein sequence ID" value="ENSP00000428459.1"/>
    <property type="gene ID" value="ENSG00000253304.2"/>
</dbReference>
<dbReference type="GeneID" id="399474"/>
<dbReference type="KEGG" id="hsa:399474"/>
<dbReference type="MANE-Select" id="ENST00000521452.2">
    <property type="protein sequence ID" value="ENSP00000428459.1"/>
    <property type="RefSeq nucleotide sequence ID" value="NM_001003682.4"/>
    <property type="RefSeq protein sequence ID" value="NP_001003682.1"/>
</dbReference>
<dbReference type="UCSC" id="uc001brn.3">
    <property type="organism name" value="human"/>
</dbReference>
<dbReference type="AGR" id="HGNC:33785"/>
<dbReference type="CTD" id="399474"/>
<dbReference type="DisGeNET" id="399474"/>
<dbReference type="GeneCards" id="TMEM200B"/>
<dbReference type="HGNC" id="HGNC:33785">
    <property type="gene designation" value="TMEM200B"/>
</dbReference>
<dbReference type="HPA" id="ENSG00000253304">
    <property type="expression patterns" value="Tissue enhanced (endometrium)"/>
</dbReference>
<dbReference type="neXtProt" id="NX_Q69YZ2"/>
<dbReference type="OpenTargets" id="ENSG00000253304"/>
<dbReference type="PharmGKB" id="PA162406350"/>
<dbReference type="VEuPathDB" id="HostDB:ENSG00000253304"/>
<dbReference type="eggNOG" id="KOG4823">
    <property type="taxonomic scope" value="Eukaryota"/>
</dbReference>
<dbReference type="GeneTree" id="ENSGT00530000063698"/>
<dbReference type="HOGENOM" id="CLU_948489_0_0_1"/>
<dbReference type="InParanoid" id="Q69YZ2"/>
<dbReference type="OMA" id="GMEQGTR"/>
<dbReference type="OrthoDB" id="9994280at2759"/>
<dbReference type="PAN-GO" id="Q69YZ2">
    <property type="GO annotations" value="0 GO annotations based on evolutionary models"/>
</dbReference>
<dbReference type="PhylomeDB" id="Q69YZ2"/>
<dbReference type="TreeFam" id="TF332635"/>
<dbReference type="PathwayCommons" id="Q69YZ2"/>
<dbReference type="SignaLink" id="Q69YZ2"/>
<dbReference type="BioGRID-ORCS" id="399474">
    <property type="hits" value="15 hits in 1145 CRISPR screens"/>
</dbReference>
<dbReference type="ChiTaRS" id="TMEM200B">
    <property type="organism name" value="human"/>
</dbReference>
<dbReference type="GenomeRNAi" id="399474"/>
<dbReference type="Pharos" id="Q69YZ2">
    <property type="development level" value="Tdark"/>
</dbReference>
<dbReference type="PRO" id="PR:Q69YZ2"/>
<dbReference type="Proteomes" id="UP000005640">
    <property type="component" value="Chromosome 1"/>
</dbReference>
<dbReference type="RNAct" id="Q69YZ2">
    <property type="molecule type" value="protein"/>
</dbReference>
<dbReference type="Bgee" id="ENSG00000253304">
    <property type="expression patterns" value="Expressed in body of uterus and 164 other cell types or tissues"/>
</dbReference>
<dbReference type="GO" id="GO:0016020">
    <property type="term" value="C:membrane"/>
    <property type="evidence" value="ECO:0007669"/>
    <property type="project" value="UniProtKB-SubCell"/>
</dbReference>
<dbReference type="InterPro" id="IPR018787">
    <property type="entry name" value="DUF2371_TMEM200"/>
</dbReference>
<dbReference type="PANTHER" id="PTHR31815">
    <property type="entry name" value="AGAP005329-PA"/>
    <property type="match status" value="1"/>
</dbReference>
<dbReference type="PANTHER" id="PTHR31815:SF3">
    <property type="entry name" value="TRANSMEMBRANE PROTEIN 200B"/>
    <property type="match status" value="1"/>
</dbReference>
<dbReference type="Pfam" id="PF10177">
    <property type="entry name" value="DUF2371"/>
    <property type="match status" value="1"/>
</dbReference>
<accession>Q69YZ2</accession>
<accession>Q6P2G8</accession>
<accession>Q6P2Q5</accession>
<comment type="subcellular location">
    <subcellularLocation>
        <location evidence="3">Membrane</location>
        <topology evidence="3">Multi-pass membrane protein</topology>
    </subcellularLocation>
</comment>
<comment type="similarity">
    <text evidence="3">Belongs to the TMEM200 family.</text>
</comment>
<proteinExistence type="evidence at protein level"/>
<sequence>MTAGSPEECGEVRRSPEGRVSRLGRRLGRRRRPRSPPEPLRVRARLRLRSPSGAFAALGALVVLVGMGIAVAGYWPHRAGAPGSRAANASSPQMSELRREGRGGGRAHGPHERLRLLGPVIMGVGLFVFICANTLLYENRDLETRRLRQGVLRAQALRPPDGPGWDCALLPSPGPRSPRAVGCAEPEIWDPSPRRGTSPVPSVRSLRSEPANPRLGLPALLNSYPLKGPGLPPPWGPRTQTGHVIITVQPSGSCIEHSKSLDLGLGELLLGAPAARDCAHRSWPRLDRLSLGGYAKLGGGGDLGARV</sequence>
<reference key="1">
    <citation type="journal article" date="2007" name="BMC Genomics">
        <title>The full-ORF clone resource of the German cDNA consortium.</title>
        <authorList>
            <person name="Bechtel S."/>
            <person name="Rosenfelder H."/>
            <person name="Duda A."/>
            <person name="Schmidt C.P."/>
            <person name="Ernst U."/>
            <person name="Wellenreuther R."/>
            <person name="Mehrle A."/>
            <person name="Schuster C."/>
            <person name="Bahr A."/>
            <person name="Bloecker H."/>
            <person name="Heubner D."/>
            <person name="Hoerlein A."/>
            <person name="Michel G."/>
            <person name="Wedler H."/>
            <person name="Koehrer K."/>
            <person name="Ottenwaelder B."/>
            <person name="Poustka A."/>
            <person name="Wiemann S."/>
            <person name="Schupp I."/>
        </authorList>
    </citation>
    <scope>NUCLEOTIDE SEQUENCE [LARGE SCALE MRNA]</scope>
    <source>
        <tissue>Testis</tissue>
    </source>
</reference>
<reference key="2">
    <citation type="journal article" date="2004" name="Genome Res.">
        <title>The status, quality, and expansion of the NIH full-length cDNA project: the Mammalian Gene Collection (MGC).</title>
        <authorList>
            <consortium name="The MGC Project Team"/>
        </authorList>
    </citation>
    <scope>NUCLEOTIDE SEQUENCE [LARGE SCALE MRNA]</scope>
    <source>
        <tissue>Brain</tissue>
        <tissue>Ovary</tissue>
    </source>
</reference>
<feature type="chain" id="PRO_0000317154" description="Transmembrane protein 200B">
    <location>
        <begin position="1"/>
        <end position="307"/>
    </location>
</feature>
<feature type="transmembrane region" description="Helical" evidence="1">
    <location>
        <begin position="53"/>
        <end position="73"/>
    </location>
</feature>
<feature type="transmembrane region" description="Helical" evidence="1">
    <location>
        <begin position="116"/>
        <end position="136"/>
    </location>
</feature>
<feature type="region of interest" description="Disordered" evidence="2">
    <location>
        <begin position="1"/>
        <end position="38"/>
    </location>
</feature>
<feature type="region of interest" description="Disordered" evidence="2">
    <location>
        <begin position="81"/>
        <end position="111"/>
    </location>
</feature>
<feature type="region of interest" description="Disordered" evidence="2">
    <location>
        <begin position="180"/>
        <end position="211"/>
    </location>
</feature>
<feature type="compositionally biased region" description="Basic and acidic residues" evidence="2">
    <location>
        <begin position="10"/>
        <end position="20"/>
    </location>
</feature>
<feature type="compositionally biased region" description="Basic residues" evidence="2">
    <location>
        <begin position="22"/>
        <end position="34"/>
    </location>
</feature>
<feature type="compositionally biased region" description="Basic and acidic residues" evidence="2">
    <location>
        <begin position="96"/>
        <end position="111"/>
    </location>
</feature>
<feature type="glycosylation site" description="N-linked (GlcNAc...) asparagine" evidence="1">
    <location>
        <position position="88"/>
    </location>
</feature>
<organism>
    <name type="scientific">Homo sapiens</name>
    <name type="common">Human</name>
    <dbReference type="NCBI Taxonomy" id="9606"/>
    <lineage>
        <taxon>Eukaryota</taxon>
        <taxon>Metazoa</taxon>
        <taxon>Chordata</taxon>
        <taxon>Craniata</taxon>
        <taxon>Vertebrata</taxon>
        <taxon>Euteleostomi</taxon>
        <taxon>Mammalia</taxon>
        <taxon>Eutheria</taxon>
        <taxon>Euarchontoglires</taxon>
        <taxon>Primates</taxon>
        <taxon>Haplorrhini</taxon>
        <taxon>Catarrhini</taxon>
        <taxon>Hominidae</taxon>
        <taxon>Homo</taxon>
    </lineage>
</organism>
<evidence type="ECO:0000255" key="1"/>
<evidence type="ECO:0000256" key="2">
    <source>
        <dbReference type="SAM" id="MobiDB-lite"/>
    </source>
</evidence>
<evidence type="ECO:0000305" key="3"/>
<protein>
    <recommendedName>
        <fullName>Transmembrane protein 200B</fullName>
    </recommendedName>
    <alternativeName>
        <fullName>Transmembrane protein TTMA</fullName>
    </alternativeName>
    <alternativeName>
        <fullName>Two transmembrane domain-containing family member B</fullName>
    </alternativeName>
</protein>
<keyword id="KW-0325">Glycoprotein</keyword>
<keyword id="KW-0472">Membrane</keyword>
<keyword id="KW-1267">Proteomics identification</keyword>
<keyword id="KW-1185">Reference proteome</keyword>
<keyword id="KW-0812">Transmembrane</keyword>
<keyword id="KW-1133">Transmembrane helix</keyword>